<evidence type="ECO:0000255" key="1">
    <source>
        <dbReference type="HAMAP-Rule" id="MF_01643"/>
    </source>
</evidence>
<evidence type="ECO:0000305" key="2"/>
<keyword id="KW-0067">ATP-binding</keyword>
<keyword id="KW-0436">Ligase</keyword>
<keyword id="KW-0460">Magnesium</keyword>
<keyword id="KW-0479">Metal-binding</keyword>
<keyword id="KW-0547">Nucleotide-binding</keyword>
<keyword id="KW-0658">Purine biosynthesis</keyword>
<keyword id="KW-1185">Reference proteome</keyword>
<protein>
    <recommendedName>
        <fullName evidence="1">Formate-dependent phosphoribosylglycinamide formyltransferase</fullName>
        <ecNumber evidence="1">6.3.1.21</ecNumber>
    </recommendedName>
    <alternativeName>
        <fullName evidence="1">5'-phosphoribosylglycinamide transformylase 2</fullName>
    </alternativeName>
    <alternativeName>
        <fullName evidence="1">Formate-dependent GAR transformylase</fullName>
    </alternativeName>
    <alternativeName>
        <fullName evidence="1">GAR transformylase 2</fullName>
        <shortName evidence="1">GART 2</shortName>
    </alternativeName>
    <alternativeName>
        <fullName evidence="1">Non-folate glycinamide ribonucleotide transformylase</fullName>
    </alternativeName>
    <alternativeName>
        <fullName evidence="1">Phosphoribosylglycinamide formyltransferase 2</fullName>
    </alternativeName>
</protein>
<sequence length="389" mass="41492">MTNFPKTVMLLGSGELGKEVAIAAQRLGCHVIACDRYADAPAMQVADQAEVLTMTDPNALKTVVNKHQPDVLIPEIEALAVDALQALEDTGICVIPTARATAVTMNRDRIRNLAAGELGLRTARFAYASDAQELQRAAAPLGWPVVVKPVMSSSGKGQSVVHSAAELDKAWEIAMAGARGSSAQVIVEEFLDFDLEITLLTIRQHDGTTLFCPPIGHQQANGDYQCSWQPASISPSQLQQAQTMARTVTDNLGGAGLFGVEFFLCGDEVVFSELSPRPHDTGLVTLISQNLSEFDLHLRAVLGLPIPSITAADAAASRVILAESQGHHVQFSGVEQALTEPDTNLLLFGKREARPGRRMGVALARGTQINEALAKADRCAAAVKVQVMD</sequence>
<comment type="function">
    <text evidence="1">Involved in the de novo purine biosynthesis. Catalyzes the transfer of formate to 5-phospho-ribosyl-glycinamide (GAR), producing 5-phospho-ribosyl-N-formylglycinamide (FGAR). Formate is provided by PurU via hydrolysis of 10-formyl-tetrahydrofolate.</text>
</comment>
<comment type="catalytic activity">
    <reaction evidence="1">
        <text>N(1)-(5-phospho-beta-D-ribosyl)glycinamide + formate + ATP = N(2)-formyl-N(1)-(5-phospho-beta-D-ribosyl)glycinamide + ADP + phosphate + H(+)</text>
        <dbReference type="Rhea" id="RHEA:24829"/>
        <dbReference type="ChEBI" id="CHEBI:15378"/>
        <dbReference type="ChEBI" id="CHEBI:15740"/>
        <dbReference type="ChEBI" id="CHEBI:30616"/>
        <dbReference type="ChEBI" id="CHEBI:43474"/>
        <dbReference type="ChEBI" id="CHEBI:143788"/>
        <dbReference type="ChEBI" id="CHEBI:147286"/>
        <dbReference type="ChEBI" id="CHEBI:456216"/>
        <dbReference type="EC" id="6.3.1.21"/>
    </reaction>
    <physiologicalReaction direction="left-to-right" evidence="1">
        <dbReference type="Rhea" id="RHEA:24830"/>
    </physiologicalReaction>
</comment>
<comment type="pathway">
    <text evidence="1">Purine metabolism; IMP biosynthesis via de novo pathway; N(2)-formyl-N(1)-(5-phospho-D-ribosyl)glycinamide from N(1)-(5-phospho-D-ribosyl)glycinamide (formate route): step 1/1.</text>
</comment>
<comment type="subunit">
    <text evidence="1">Homodimer.</text>
</comment>
<comment type="similarity">
    <text evidence="1">Belongs to the PurK/PurT family.</text>
</comment>
<comment type="sequence caution" evidence="2">
    <conflict type="erroneous initiation">
        <sequence resource="EMBL-CDS" id="ABI46177"/>
    </conflict>
</comment>
<proteinExistence type="inferred from homology"/>
<accession>Q0I600</accession>
<reference key="1">
    <citation type="journal article" date="2006" name="Proc. Natl. Acad. Sci. U.S.A.">
        <title>Genome sequence of Synechococcus CC9311: insights into adaptation to a coastal environment.</title>
        <authorList>
            <person name="Palenik B."/>
            <person name="Ren Q."/>
            <person name="Dupont C.L."/>
            <person name="Myers G.S."/>
            <person name="Heidelberg J.F."/>
            <person name="Badger J.H."/>
            <person name="Madupu R."/>
            <person name="Nelson W.C."/>
            <person name="Brinkac L.M."/>
            <person name="Dodson R.J."/>
            <person name="Durkin A.S."/>
            <person name="Daugherty S.C."/>
            <person name="Sullivan S.A."/>
            <person name="Khouri H."/>
            <person name="Mohamoud Y."/>
            <person name="Halpin R."/>
            <person name="Paulsen I.T."/>
        </authorList>
    </citation>
    <scope>NUCLEOTIDE SEQUENCE [LARGE SCALE GENOMIC DNA]</scope>
    <source>
        <strain>CC9311</strain>
    </source>
</reference>
<organism>
    <name type="scientific">Synechococcus sp. (strain CC9311)</name>
    <dbReference type="NCBI Taxonomy" id="64471"/>
    <lineage>
        <taxon>Bacteria</taxon>
        <taxon>Bacillati</taxon>
        <taxon>Cyanobacteriota</taxon>
        <taxon>Cyanophyceae</taxon>
        <taxon>Synechococcales</taxon>
        <taxon>Synechococcaceae</taxon>
        <taxon>Synechococcus</taxon>
    </lineage>
</organism>
<feature type="chain" id="PRO_0000319246" description="Formate-dependent phosphoribosylglycinamide formyltransferase">
    <location>
        <begin position="1"/>
        <end position="389"/>
    </location>
</feature>
<feature type="domain" description="ATP-grasp" evidence="1">
    <location>
        <begin position="112"/>
        <end position="302"/>
    </location>
</feature>
<feature type="binding site" evidence="1">
    <location>
        <begin position="15"/>
        <end position="16"/>
    </location>
    <ligand>
        <name>N(1)-(5-phospho-beta-D-ribosyl)glycinamide</name>
        <dbReference type="ChEBI" id="CHEBI:143788"/>
    </ligand>
</feature>
<feature type="binding site" evidence="1">
    <location>
        <position position="75"/>
    </location>
    <ligand>
        <name>N(1)-(5-phospho-beta-D-ribosyl)glycinamide</name>
        <dbReference type="ChEBI" id="CHEBI:143788"/>
    </ligand>
</feature>
<feature type="binding site" evidence="1">
    <location>
        <position position="107"/>
    </location>
    <ligand>
        <name>ATP</name>
        <dbReference type="ChEBI" id="CHEBI:30616"/>
    </ligand>
</feature>
<feature type="binding site" evidence="1">
    <location>
        <position position="148"/>
    </location>
    <ligand>
        <name>ATP</name>
        <dbReference type="ChEBI" id="CHEBI:30616"/>
    </ligand>
</feature>
<feature type="binding site" evidence="1">
    <location>
        <begin position="153"/>
        <end position="158"/>
    </location>
    <ligand>
        <name>ATP</name>
        <dbReference type="ChEBI" id="CHEBI:30616"/>
    </ligand>
</feature>
<feature type="binding site" evidence="1">
    <location>
        <begin position="188"/>
        <end position="191"/>
    </location>
    <ligand>
        <name>ATP</name>
        <dbReference type="ChEBI" id="CHEBI:30616"/>
    </ligand>
</feature>
<feature type="binding site" evidence="1">
    <location>
        <position position="196"/>
    </location>
    <ligand>
        <name>ATP</name>
        <dbReference type="ChEBI" id="CHEBI:30616"/>
    </ligand>
</feature>
<feature type="binding site" evidence="1">
    <location>
        <position position="261"/>
    </location>
    <ligand>
        <name>Mg(2+)</name>
        <dbReference type="ChEBI" id="CHEBI:18420"/>
    </ligand>
</feature>
<feature type="binding site" evidence="1">
    <location>
        <position position="273"/>
    </location>
    <ligand>
        <name>Mg(2+)</name>
        <dbReference type="ChEBI" id="CHEBI:18420"/>
    </ligand>
</feature>
<feature type="binding site" evidence="1">
    <location>
        <position position="280"/>
    </location>
    <ligand>
        <name>N(1)-(5-phospho-beta-D-ribosyl)glycinamide</name>
        <dbReference type="ChEBI" id="CHEBI:143788"/>
    </ligand>
</feature>
<feature type="binding site" evidence="1">
    <location>
        <position position="350"/>
    </location>
    <ligand>
        <name>N(1)-(5-phospho-beta-D-ribosyl)glycinamide</name>
        <dbReference type="ChEBI" id="CHEBI:143788"/>
    </ligand>
</feature>
<feature type="binding site" evidence="1">
    <location>
        <begin position="357"/>
        <end position="358"/>
    </location>
    <ligand>
        <name>N(1)-(5-phospho-beta-D-ribosyl)glycinamide</name>
        <dbReference type="ChEBI" id="CHEBI:143788"/>
    </ligand>
</feature>
<gene>
    <name evidence="1" type="primary">purT</name>
    <name type="ordered locus">sync_2935</name>
</gene>
<name>PURT_SYNS3</name>
<dbReference type="EC" id="6.3.1.21" evidence="1"/>
<dbReference type="EMBL" id="CP000435">
    <property type="protein sequence ID" value="ABI46177.1"/>
    <property type="status" value="ALT_INIT"/>
    <property type="molecule type" value="Genomic_DNA"/>
</dbReference>
<dbReference type="RefSeq" id="WP_041426813.1">
    <property type="nucleotide sequence ID" value="NC_008319.1"/>
</dbReference>
<dbReference type="SMR" id="Q0I600"/>
<dbReference type="STRING" id="64471.sync_2935"/>
<dbReference type="KEGG" id="syg:sync_2935"/>
<dbReference type="eggNOG" id="COG0027">
    <property type="taxonomic scope" value="Bacteria"/>
</dbReference>
<dbReference type="HOGENOM" id="CLU_011534_1_3_3"/>
<dbReference type="OrthoDB" id="9804625at2"/>
<dbReference type="UniPathway" id="UPA00074">
    <property type="reaction ID" value="UER00127"/>
</dbReference>
<dbReference type="Proteomes" id="UP000001961">
    <property type="component" value="Chromosome"/>
</dbReference>
<dbReference type="GO" id="GO:0005829">
    <property type="term" value="C:cytosol"/>
    <property type="evidence" value="ECO:0007669"/>
    <property type="project" value="TreeGrafter"/>
</dbReference>
<dbReference type="GO" id="GO:0005524">
    <property type="term" value="F:ATP binding"/>
    <property type="evidence" value="ECO:0007669"/>
    <property type="project" value="UniProtKB-UniRule"/>
</dbReference>
<dbReference type="GO" id="GO:0000287">
    <property type="term" value="F:magnesium ion binding"/>
    <property type="evidence" value="ECO:0007669"/>
    <property type="project" value="InterPro"/>
</dbReference>
<dbReference type="GO" id="GO:0043815">
    <property type="term" value="F:phosphoribosylglycinamide formyltransferase 2 activity"/>
    <property type="evidence" value="ECO:0007669"/>
    <property type="project" value="UniProtKB-UniRule"/>
</dbReference>
<dbReference type="GO" id="GO:0004644">
    <property type="term" value="F:phosphoribosylglycinamide formyltransferase activity"/>
    <property type="evidence" value="ECO:0007669"/>
    <property type="project" value="InterPro"/>
</dbReference>
<dbReference type="GO" id="GO:0006189">
    <property type="term" value="P:'de novo' IMP biosynthetic process"/>
    <property type="evidence" value="ECO:0007669"/>
    <property type="project" value="UniProtKB-UniRule"/>
</dbReference>
<dbReference type="Gene3D" id="3.40.50.20">
    <property type="match status" value="1"/>
</dbReference>
<dbReference type="Gene3D" id="3.30.1490.20">
    <property type="entry name" value="ATP-grasp fold, A domain"/>
    <property type="match status" value="1"/>
</dbReference>
<dbReference type="Gene3D" id="3.30.470.20">
    <property type="entry name" value="ATP-grasp fold, B domain"/>
    <property type="match status" value="1"/>
</dbReference>
<dbReference type="HAMAP" id="MF_01643">
    <property type="entry name" value="PurT"/>
    <property type="match status" value="1"/>
</dbReference>
<dbReference type="InterPro" id="IPR011761">
    <property type="entry name" value="ATP-grasp"/>
</dbReference>
<dbReference type="InterPro" id="IPR003135">
    <property type="entry name" value="ATP-grasp_carboxylate-amine"/>
</dbReference>
<dbReference type="InterPro" id="IPR013815">
    <property type="entry name" value="ATP_grasp_subdomain_1"/>
</dbReference>
<dbReference type="InterPro" id="IPR016185">
    <property type="entry name" value="PreATP-grasp_dom_sf"/>
</dbReference>
<dbReference type="InterPro" id="IPR005862">
    <property type="entry name" value="PurT"/>
</dbReference>
<dbReference type="InterPro" id="IPR054350">
    <property type="entry name" value="PurT/PurK_preATP-grasp"/>
</dbReference>
<dbReference type="InterPro" id="IPR048740">
    <property type="entry name" value="PurT_C"/>
</dbReference>
<dbReference type="InterPro" id="IPR011054">
    <property type="entry name" value="Rudment_hybrid_motif"/>
</dbReference>
<dbReference type="NCBIfam" id="NF006766">
    <property type="entry name" value="PRK09288.1"/>
    <property type="match status" value="1"/>
</dbReference>
<dbReference type="NCBIfam" id="TIGR01142">
    <property type="entry name" value="purT"/>
    <property type="match status" value="1"/>
</dbReference>
<dbReference type="PANTHER" id="PTHR43055">
    <property type="entry name" value="FORMATE-DEPENDENT PHOSPHORIBOSYLGLYCINAMIDE FORMYLTRANSFERASE"/>
    <property type="match status" value="1"/>
</dbReference>
<dbReference type="PANTHER" id="PTHR43055:SF1">
    <property type="entry name" value="FORMATE-DEPENDENT PHOSPHORIBOSYLGLYCINAMIDE FORMYLTRANSFERASE"/>
    <property type="match status" value="1"/>
</dbReference>
<dbReference type="Pfam" id="PF02222">
    <property type="entry name" value="ATP-grasp"/>
    <property type="match status" value="1"/>
</dbReference>
<dbReference type="Pfam" id="PF21244">
    <property type="entry name" value="PurT_C"/>
    <property type="match status" value="1"/>
</dbReference>
<dbReference type="Pfam" id="PF22660">
    <property type="entry name" value="RS_preATP-grasp-like"/>
    <property type="match status" value="1"/>
</dbReference>
<dbReference type="SUPFAM" id="SSF56059">
    <property type="entry name" value="Glutathione synthetase ATP-binding domain-like"/>
    <property type="match status" value="1"/>
</dbReference>
<dbReference type="SUPFAM" id="SSF52440">
    <property type="entry name" value="PreATP-grasp domain"/>
    <property type="match status" value="1"/>
</dbReference>
<dbReference type="SUPFAM" id="SSF51246">
    <property type="entry name" value="Rudiment single hybrid motif"/>
    <property type="match status" value="1"/>
</dbReference>
<dbReference type="PROSITE" id="PS50975">
    <property type="entry name" value="ATP_GRASP"/>
    <property type="match status" value="1"/>
</dbReference>